<name>RS16_FRATW</name>
<keyword id="KW-0687">Ribonucleoprotein</keyword>
<keyword id="KW-0689">Ribosomal protein</keyword>
<dbReference type="EMBL" id="CP000608">
    <property type="protein sequence ID" value="ABO46207.1"/>
    <property type="molecule type" value="Genomic_DNA"/>
</dbReference>
<dbReference type="RefSeq" id="WP_003023081.1">
    <property type="nucleotide sequence ID" value="NC_009257.1"/>
</dbReference>
<dbReference type="SMR" id="A4IWA5"/>
<dbReference type="KEGG" id="ftw:FTW_0240"/>
<dbReference type="HOGENOM" id="CLU_100590_5_1_6"/>
<dbReference type="GO" id="GO:0005737">
    <property type="term" value="C:cytoplasm"/>
    <property type="evidence" value="ECO:0007669"/>
    <property type="project" value="UniProtKB-ARBA"/>
</dbReference>
<dbReference type="GO" id="GO:0015935">
    <property type="term" value="C:small ribosomal subunit"/>
    <property type="evidence" value="ECO:0007669"/>
    <property type="project" value="TreeGrafter"/>
</dbReference>
<dbReference type="GO" id="GO:0003735">
    <property type="term" value="F:structural constituent of ribosome"/>
    <property type="evidence" value="ECO:0007669"/>
    <property type="project" value="InterPro"/>
</dbReference>
<dbReference type="GO" id="GO:0006412">
    <property type="term" value="P:translation"/>
    <property type="evidence" value="ECO:0007669"/>
    <property type="project" value="UniProtKB-UniRule"/>
</dbReference>
<dbReference type="Gene3D" id="3.30.1320.10">
    <property type="match status" value="1"/>
</dbReference>
<dbReference type="HAMAP" id="MF_00385">
    <property type="entry name" value="Ribosomal_bS16"/>
    <property type="match status" value="1"/>
</dbReference>
<dbReference type="InterPro" id="IPR000307">
    <property type="entry name" value="Ribosomal_bS16"/>
</dbReference>
<dbReference type="InterPro" id="IPR023803">
    <property type="entry name" value="Ribosomal_bS16_dom_sf"/>
</dbReference>
<dbReference type="NCBIfam" id="TIGR00002">
    <property type="entry name" value="S16"/>
    <property type="match status" value="1"/>
</dbReference>
<dbReference type="PANTHER" id="PTHR12919">
    <property type="entry name" value="30S RIBOSOMAL PROTEIN S16"/>
    <property type="match status" value="1"/>
</dbReference>
<dbReference type="PANTHER" id="PTHR12919:SF20">
    <property type="entry name" value="SMALL RIBOSOMAL SUBUNIT PROTEIN BS16M"/>
    <property type="match status" value="1"/>
</dbReference>
<dbReference type="Pfam" id="PF00886">
    <property type="entry name" value="Ribosomal_S16"/>
    <property type="match status" value="1"/>
</dbReference>
<dbReference type="SUPFAM" id="SSF54565">
    <property type="entry name" value="Ribosomal protein S16"/>
    <property type="match status" value="1"/>
</dbReference>
<gene>
    <name evidence="1" type="primary">rpsP</name>
    <name type="ordered locus">FTW_0240</name>
</gene>
<sequence>MVVIRMARGGAKKRPFYRIVVADKRSPRDGRFIEKLGFFNPLAKGGEERLKLDVAKAEAWLAKGAQPSDRVASLIKEAKKAA</sequence>
<feature type="chain" id="PRO_1000049261" description="Small ribosomal subunit protein bS16">
    <location>
        <begin position="1"/>
        <end position="82"/>
    </location>
</feature>
<protein>
    <recommendedName>
        <fullName evidence="1">Small ribosomal subunit protein bS16</fullName>
    </recommendedName>
    <alternativeName>
        <fullName evidence="2">30S ribosomal protein S16</fullName>
    </alternativeName>
</protein>
<proteinExistence type="inferred from homology"/>
<organism>
    <name type="scientific">Francisella tularensis subsp. tularensis (strain WY96-3418)</name>
    <dbReference type="NCBI Taxonomy" id="418136"/>
    <lineage>
        <taxon>Bacteria</taxon>
        <taxon>Pseudomonadati</taxon>
        <taxon>Pseudomonadota</taxon>
        <taxon>Gammaproteobacteria</taxon>
        <taxon>Thiotrichales</taxon>
        <taxon>Francisellaceae</taxon>
        <taxon>Francisella</taxon>
    </lineage>
</organism>
<comment type="similarity">
    <text evidence="1">Belongs to the bacterial ribosomal protein bS16 family.</text>
</comment>
<reference key="1">
    <citation type="journal article" date="2007" name="PLoS ONE">
        <title>Complete genomic characterization of a pathogenic A.II strain of Francisella tularensis subspecies tularensis.</title>
        <authorList>
            <person name="Beckstrom-Sternberg S.M."/>
            <person name="Auerbach R.K."/>
            <person name="Godbole S."/>
            <person name="Pearson J.V."/>
            <person name="Beckstrom-Sternberg J.S."/>
            <person name="Deng Z."/>
            <person name="Munk C."/>
            <person name="Kubota K."/>
            <person name="Zhou Y."/>
            <person name="Bruce D."/>
            <person name="Noronha J."/>
            <person name="Scheuermann R.H."/>
            <person name="Wang A."/>
            <person name="Wei X."/>
            <person name="Wang J."/>
            <person name="Hao J."/>
            <person name="Wagner D.M."/>
            <person name="Brettin T.S."/>
            <person name="Brown N."/>
            <person name="Gilna P."/>
            <person name="Keim P.S."/>
        </authorList>
    </citation>
    <scope>NUCLEOTIDE SEQUENCE [LARGE SCALE GENOMIC DNA]</scope>
    <source>
        <strain>WY96-3418</strain>
    </source>
</reference>
<evidence type="ECO:0000255" key="1">
    <source>
        <dbReference type="HAMAP-Rule" id="MF_00385"/>
    </source>
</evidence>
<evidence type="ECO:0000305" key="2"/>
<accession>A4IWA5</accession>